<dbReference type="EMBL" id="X74045">
    <property type="protein sequence ID" value="CAA52194.1"/>
    <property type="molecule type" value="mRNA"/>
</dbReference>
<dbReference type="PIR" id="S34053">
    <property type="entry name" value="ABHOS"/>
</dbReference>
<dbReference type="RefSeq" id="NP_001075972.1">
    <property type="nucleotide sequence ID" value="NM_001082503.1"/>
</dbReference>
<dbReference type="PDB" id="3V08">
    <property type="method" value="X-ray"/>
    <property type="resolution" value="2.45 A"/>
    <property type="chains" value="A=25-607"/>
</dbReference>
<dbReference type="PDB" id="4F5T">
    <property type="method" value="X-ray"/>
    <property type="resolution" value="2.32 A"/>
    <property type="chains" value="A=25-607"/>
</dbReference>
<dbReference type="PDB" id="4F5U">
    <property type="method" value="X-ray"/>
    <property type="resolution" value="2.04 A"/>
    <property type="chains" value="A=25-607"/>
</dbReference>
<dbReference type="PDB" id="4J2V">
    <property type="method" value="X-ray"/>
    <property type="resolution" value="2.12 A"/>
    <property type="chains" value="A=25-607"/>
</dbReference>
<dbReference type="PDB" id="4OT2">
    <property type="method" value="X-ray"/>
    <property type="resolution" value="2.42 A"/>
    <property type="chains" value="A=25-607"/>
</dbReference>
<dbReference type="PDB" id="4ZBQ">
    <property type="method" value="X-ray"/>
    <property type="resolution" value="1.92 A"/>
    <property type="chains" value="A=25-607"/>
</dbReference>
<dbReference type="PDB" id="4ZBR">
    <property type="method" value="X-ray"/>
    <property type="resolution" value="2.19 A"/>
    <property type="chains" value="A=25-607"/>
</dbReference>
<dbReference type="PDB" id="5DBY">
    <property type="method" value="X-ray"/>
    <property type="resolution" value="2.35 A"/>
    <property type="chains" value="A=25-607"/>
</dbReference>
<dbReference type="PDB" id="5DQF">
    <property type="method" value="X-ray"/>
    <property type="resolution" value="2.15 A"/>
    <property type="chains" value="A=28-607"/>
</dbReference>
<dbReference type="PDB" id="5HOZ">
    <property type="method" value="X-ray"/>
    <property type="resolution" value="2.15 A"/>
    <property type="chains" value="A=25-607"/>
</dbReference>
<dbReference type="PDB" id="5ID9">
    <property type="method" value="X-ray"/>
    <property type="resolution" value="2.48 A"/>
    <property type="chains" value="A=25-607"/>
</dbReference>
<dbReference type="PDB" id="5IIH">
    <property type="method" value="X-ray"/>
    <property type="resolution" value="2.40 A"/>
    <property type="chains" value="A=25-607"/>
</dbReference>
<dbReference type="PDB" id="5IIU">
    <property type="method" value="X-ray"/>
    <property type="resolution" value="2.30 A"/>
    <property type="chains" value="A=25-607"/>
</dbReference>
<dbReference type="PDB" id="5IIX">
    <property type="method" value="X-ray"/>
    <property type="resolution" value="2.20 A"/>
    <property type="chains" value="A=25-607"/>
</dbReference>
<dbReference type="PDB" id="5IJ5">
    <property type="method" value="X-ray"/>
    <property type="resolution" value="2.55 A"/>
    <property type="chains" value="A=25-607"/>
</dbReference>
<dbReference type="PDB" id="5IJE">
    <property type="method" value="X-ray"/>
    <property type="resolution" value="2.40 A"/>
    <property type="chains" value="A=25-607"/>
</dbReference>
<dbReference type="PDB" id="5V0V">
    <property type="method" value="X-ray"/>
    <property type="resolution" value="2.45 A"/>
    <property type="chains" value="A=25-607"/>
</dbReference>
<dbReference type="PDB" id="6CI6">
    <property type="method" value="X-ray"/>
    <property type="resolution" value="2.80 A"/>
    <property type="chains" value="A=25-607"/>
</dbReference>
<dbReference type="PDB" id="6MDQ">
    <property type="method" value="X-ray"/>
    <property type="resolution" value="2.15 A"/>
    <property type="chains" value="A=25-607"/>
</dbReference>
<dbReference type="PDB" id="6OCI">
    <property type="method" value="X-ray"/>
    <property type="resolution" value="2.54 A"/>
    <property type="chains" value="A=25-607"/>
</dbReference>
<dbReference type="PDB" id="6OCJ">
    <property type="method" value="X-ray"/>
    <property type="resolution" value="2.50 A"/>
    <property type="chains" value="A=25-607"/>
</dbReference>
<dbReference type="PDB" id="6U4R">
    <property type="method" value="X-ray"/>
    <property type="resolution" value="2.45 A"/>
    <property type="chains" value="A=25-607"/>
</dbReference>
<dbReference type="PDB" id="6U4X">
    <property type="method" value="X-ray"/>
    <property type="resolution" value="2.25 A"/>
    <property type="chains" value="A=25-607"/>
</dbReference>
<dbReference type="PDB" id="6U5A">
    <property type="method" value="X-ray"/>
    <property type="resolution" value="2.65 A"/>
    <property type="chains" value="A=25-607"/>
</dbReference>
<dbReference type="PDB" id="6XK0">
    <property type="method" value="X-ray"/>
    <property type="resolution" value="2.40 A"/>
    <property type="chains" value="A=25-607"/>
</dbReference>
<dbReference type="PDB" id="7MBL">
    <property type="method" value="X-ray"/>
    <property type="resolution" value="2.70 A"/>
    <property type="chains" value="A=25-607"/>
</dbReference>
<dbReference type="PDB" id="7Q4X">
    <property type="method" value="X-ray"/>
    <property type="resolution" value="2.12 A"/>
    <property type="chains" value="A=28-607"/>
</dbReference>
<dbReference type="PDBsum" id="3V08"/>
<dbReference type="PDBsum" id="4F5T"/>
<dbReference type="PDBsum" id="4F5U"/>
<dbReference type="PDBsum" id="4J2V"/>
<dbReference type="PDBsum" id="4OT2"/>
<dbReference type="PDBsum" id="4ZBQ"/>
<dbReference type="PDBsum" id="4ZBR"/>
<dbReference type="PDBsum" id="5DBY"/>
<dbReference type="PDBsum" id="5DQF"/>
<dbReference type="PDBsum" id="5HOZ"/>
<dbReference type="PDBsum" id="5ID9"/>
<dbReference type="PDBsum" id="5IIH"/>
<dbReference type="PDBsum" id="5IIU"/>
<dbReference type="PDBsum" id="5IIX"/>
<dbReference type="PDBsum" id="5IJ5"/>
<dbReference type="PDBsum" id="5IJE"/>
<dbReference type="PDBsum" id="5V0V"/>
<dbReference type="PDBsum" id="6CI6"/>
<dbReference type="PDBsum" id="6MDQ"/>
<dbReference type="PDBsum" id="6OCI"/>
<dbReference type="PDBsum" id="6OCJ"/>
<dbReference type="PDBsum" id="6U4R"/>
<dbReference type="PDBsum" id="6U4X"/>
<dbReference type="PDBsum" id="6U5A"/>
<dbReference type="PDBsum" id="6XK0"/>
<dbReference type="PDBsum" id="7MBL"/>
<dbReference type="PDBsum" id="7Q4X"/>
<dbReference type="SMR" id="P35747"/>
<dbReference type="FunCoup" id="P35747">
    <property type="interactions" value="343"/>
</dbReference>
<dbReference type="STRING" id="9796.ENSECAP00000041304"/>
<dbReference type="ChEMBL" id="CHEMBL3751645"/>
<dbReference type="Allergome" id="3302">
    <property type="allergen name" value="Equ c 3.0101"/>
</dbReference>
<dbReference type="Allergome" id="335">
    <property type="allergen name" value="Equ c 3"/>
</dbReference>
<dbReference type="PaxDb" id="9796-ENSECAP00000041304"/>
<dbReference type="PeptideAtlas" id="P35747"/>
<dbReference type="GeneID" id="100034206"/>
<dbReference type="KEGG" id="ecb:100034206"/>
<dbReference type="CTD" id="213"/>
<dbReference type="InParanoid" id="P35747"/>
<dbReference type="OrthoDB" id="9875082at2759"/>
<dbReference type="EvolutionaryTrace" id="P35747"/>
<dbReference type="Proteomes" id="UP000002281">
    <property type="component" value="Unplaced"/>
</dbReference>
<dbReference type="GO" id="GO:0005737">
    <property type="term" value="C:cytoplasm"/>
    <property type="evidence" value="ECO:0000318"/>
    <property type="project" value="GO_Central"/>
</dbReference>
<dbReference type="GO" id="GO:0005615">
    <property type="term" value="C:extracellular space"/>
    <property type="evidence" value="ECO:0007669"/>
    <property type="project" value="InterPro"/>
</dbReference>
<dbReference type="GO" id="GO:0032991">
    <property type="term" value="C:protein-containing complex"/>
    <property type="evidence" value="ECO:0000250"/>
    <property type="project" value="UniProtKB"/>
</dbReference>
<dbReference type="GO" id="GO:0003677">
    <property type="term" value="F:DNA binding"/>
    <property type="evidence" value="ECO:0000250"/>
    <property type="project" value="UniProtKB"/>
</dbReference>
<dbReference type="GO" id="GO:1903981">
    <property type="term" value="F:enterobactin binding"/>
    <property type="evidence" value="ECO:0000250"/>
    <property type="project" value="UniProtKB"/>
</dbReference>
<dbReference type="GO" id="GO:0005504">
    <property type="term" value="F:fatty acid binding"/>
    <property type="evidence" value="ECO:0000250"/>
    <property type="project" value="UniProtKB"/>
</dbReference>
<dbReference type="GO" id="GO:0046872">
    <property type="term" value="F:metal ion binding"/>
    <property type="evidence" value="ECO:0007669"/>
    <property type="project" value="UniProtKB-KW"/>
</dbReference>
<dbReference type="GO" id="GO:0030170">
    <property type="term" value="F:pyridoxal phosphate binding"/>
    <property type="evidence" value="ECO:0000250"/>
    <property type="project" value="UniProtKB"/>
</dbReference>
<dbReference type="GO" id="GO:0015643">
    <property type="term" value="F:toxic substance binding"/>
    <property type="evidence" value="ECO:0000250"/>
    <property type="project" value="UniProtKB"/>
</dbReference>
<dbReference type="GO" id="GO:0072732">
    <property type="term" value="P:cellular response to calcium ion starvation"/>
    <property type="evidence" value="ECO:0000250"/>
    <property type="project" value="UniProtKB"/>
</dbReference>
<dbReference type="GO" id="GO:0009267">
    <property type="term" value="P:cellular response to starvation"/>
    <property type="evidence" value="ECO:0000250"/>
    <property type="project" value="UniProtKB"/>
</dbReference>
<dbReference type="GO" id="GO:0051902">
    <property type="term" value="P:negative regulation of mitochondrial depolarization"/>
    <property type="evidence" value="ECO:0000250"/>
    <property type="project" value="UniProtKB"/>
</dbReference>
<dbReference type="CDD" id="cd00015">
    <property type="entry name" value="ALBUMIN"/>
    <property type="match status" value="3"/>
</dbReference>
<dbReference type="FunFam" id="1.10.246.10:FF:000001">
    <property type="entry name" value="Serum albumin"/>
    <property type="match status" value="2"/>
</dbReference>
<dbReference type="FunFam" id="1.10.246.10:FF:000002">
    <property type="entry name" value="Serum albumin"/>
    <property type="match status" value="2"/>
</dbReference>
<dbReference type="FunFam" id="1.10.246.10:FF:000003">
    <property type="entry name" value="Serum albumin"/>
    <property type="match status" value="1"/>
</dbReference>
<dbReference type="Gene3D" id="1.10.246.10">
    <property type="match status" value="6"/>
</dbReference>
<dbReference type="InterPro" id="IPR000264">
    <property type="entry name" value="ALB/AFP/VDB"/>
</dbReference>
<dbReference type="InterPro" id="IPR020858">
    <property type="entry name" value="Serum_albumin-like"/>
</dbReference>
<dbReference type="InterPro" id="IPR021177">
    <property type="entry name" value="Serum_albumin/AFP/Afamin"/>
</dbReference>
<dbReference type="InterPro" id="IPR020857">
    <property type="entry name" value="Serum_albumin_CS"/>
</dbReference>
<dbReference type="InterPro" id="IPR014760">
    <property type="entry name" value="Serum_albumin_N"/>
</dbReference>
<dbReference type="PANTHER" id="PTHR11385:SF15">
    <property type="entry name" value="ALBUMIN"/>
    <property type="match status" value="1"/>
</dbReference>
<dbReference type="PANTHER" id="PTHR11385">
    <property type="entry name" value="SERUM ALBUMIN-RELATED"/>
    <property type="match status" value="1"/>
</dbReference>
<dbReference type="Pfam" id="PF00273">
    <property type="entry name" value="Serum_albumin"/>
    <property type="match status" value="3"/>
</dbReference>
<dbReference type="PIRSF" id="PIRSF002520">
    <property type="entry name" value="Serum_albumin_subgroup"/>
    <property type="match status" value="1"/>
</dbReference>
<dbReference type="PRINTS" id="PR00802">
    <property type="entry name" value="SERUMALBUMIN"/>
</dbReference>
<dbReference type="SMART" id="SM00103">
    <property type="entry name" value="ALBUMIN"/>
    <property type="match status" value="3"/>
</dbReference>
<dbReference type="SUPFAM" id="SSF48552">
    <property type="entry name" value="Serum albumin-like"/>
    <property type="match status" value="3"/>
</dbReference>
<dbReference type="PROSITE" id="PS00212">
    <property type="entry name" value="ALBUMIN_1"/>
    <property type="match status" value="3"/>
</dbReference>
<dbReference type="PROSITE" id="PS51438">
    <property type="entry name" value="ALBUMIN_2"/>
    <property type="match status" value="3"/>
</dbReference>
<sequence>MKWVTFVSLLFLFSSAYSRGVLRRDTHKSEIAHRFNDLGEKHFKGLVLVAFSQYLQQCPFEDHVKLVNEVTEFAKKCAADESAENCDKSLHTLFGDKLCTVATLRATYGELADCCEKQEPERNECFLTHKDDHPNLPKLKPEPDAQCAAFQEDPDKFLGKYLYEVARRHPYFYGPELLFHAEEYKADFTECCPADDKLACLIPKLDALKERILLSSAKERLKCSSFQNFGERAVKAWSVARLSQKFPKADFAEVSKIVTDLTKVHKECCHGDLLECADDRADLAKYICEHQDSISGKLKACCDKPLLQKSHCIAEVKEDDLPSDLPALAADFAEDKEICKHYKDAKDVFLGTFLYEYSRRHPDYSVSLLLRIAKTYEATLEKCCAEADPPACYRTVFDQFTPLVEEPKSLVKKNCDLFEEVGEYDFQNALIVRYTKKAPQVSTPTLVEIGRTLGKVGSRCCKLPESERLPCSENHLALALNRLCVLHEKTPVSEKITKCCTDSLAERRPCFSALELDEGYVPKEFKAETFTFHADICTLPEDEKQIKKQSALAELVKHKPKATKEQLKTVLGNFSAFVAKCCGREDKEACFAEEGPKLVASSQLALA</sequence>
<gene>
    <name type="primary">ALB</name>
</gene>
<accession>P35747</accession>
<organism>
    <name type="scientific">Equus caballus</name>
    <name type="common">Horse</name>
    <dbReference type="NCBI Taxonomy" id="9796"/>
    <lineage>
        <taxon>Eukaryota</taxon>
        <taxon>Metazoa</taxon>
        <taxon>Chordata</taxon>
        <taxon>Craniata</taxon>
        <taxon>Vertebrata</taxon>
        <taxon>Euteleostomi</taxon>
        <taxon>Mammalia</taxon>
        <taxon>Eutheria</taxon>
        <taxon>Laurasiatheria</taxon>
        <taxon>Perissodactyla</taxon>
        <taxon>Equidae</taxon>
        <taxon>Equus</taxon>
    </lineage>
</organism>
<proteinExistence type="evidence at protein level"/>
<comment type="function">
    <text evidence="1 2">Binds water, Ca(2+), Na(+), K(+), fatty acids, hormones, bilirubin and drugs. Its main function is the regulation of the colloidal osmotic pressure of blood. Major zinc transporter in plasma, typically binds about 80% of all plasma zinc (By similarity). Major calcium and magnesium transporter in plasma, binds approximately 45% of circulating calcium and magnesium in plasma (By similarity). Potentially has more than two calcium-binding sites and might additionally bind calcium in a non-specific manner (By similarity). The shared binding site between zinc and calcium at residue Asp-272 suggests a crosstalk between zinc and calcium transport in the blood (By similarity). The rank order of affinity is zinc &gt; calcium &gt; magnesium (By similarity). Binds to the bacterial siderophore enterobactin and inhibits enterobactin-mediated iron uptake of E.coli from ferric transferrin, and may thereby limit the utilization of iron and growth of enteric bacteria such as E.coli (By similarity). Does not prevent iron uptake by the bacterial siderophore aerobactin (By similarity).</text>
</comment>
<comment type="subunit">
    <text evidence="1 4">Interacts with FCGRT; this interaction regulates ALB homeostasis (By similarity). Interacts with TASOR (By similarity). In plasma, occurs in a covalently-linked complex with chromophore-bound alpha-1-microglobulin; this interaction does not prevent fatty acid binding to ALB.</text>
</comment>
<comment type="subcellular location">
    <subcellularLocation>
        <location>Secreted</location>
    </subcellularLocation>
</comment>
<comment type="tissue specificity">
    <text>Plasma.</text>
</comment>
<comment type="PTM">
    <text evidence="1">Phosphorylated by FAM20C in the extracellular medium.</text>
</comment>
<comment type="allergen">
    <text>Can cause allergic reactions in humans. Binds to IgE.</text>
</comment>
<comment type="similarity">
    <text evidence="6">Belongs to the ALB/AFP/VDB family.</text>
</comment>
<keyword id="KW-0002">3D-structure</keyword>
<keyword id="KW-0020">Allergen</keyword>
<keyword id="KW-0106">Calcium</keyword>
<keyword id="KW-0165">Cleavage on pair of basic residues</keyword>
<keyword id="KW-0186">Copper</keyword>
<keyword id="KW-1015">Disulfide bond</keyword>
<keyword id="KW-0446">Lipid-binding</keyword>
<keyword id="KW-0479">Metal-binding</keyword>
<keyword id="KW-0488">Methylation</keyword>
<keyword id="KW-0597">Phosphoprotein</keyword>
<keyword id="KW-1185">Reference proteome</keyword>
<keyword id="KW-0677">Repeat</keyword>
<keyword id="KW-0964">Secreted</keyword>
<keyword id="KW-0732">Signal</keyword>
<keyword id="KW-0862">Zinc</keyword>
<evidence type="ECO:0000250" key="1">
    <source>
        <dbReference type="UniProtKB" id="P02768"/>
    </source>
</evidence>
<evidence type="ECO:0000250" key="2">
    <source>
        <dbReference type="UniProtKB" id="P02769"/>
    </source>
</evidence>
<evidence type="ECO:0000250" key="3">
    <source>
        <dbReference type="UniProtKB" id="P02770"/>
    </source>
</evidence>
<evidence type="ECO:0000250" key="4">
    <source>
        <dbReference type="UniProtKB" id="P07724"/>
    </source>
</evidence>
<evidence type="ECO:0000255" key="5"/>
<evidence type="ECO:0000255" key="6">
    <source>
        <dbReference type="PROSITE-ProRule" id="PRU00769"/>
    </source>
</evidence>
<evidence type="ECO:0000269" key="7">
    <source>
    </source>
</evidence>
<evidence type="ECO:0000269" key="8">
    <source>
    </source>
</evidence>
<evidence type="ECO:0000269" key="9">
    <source>
    </source>
</evidence>
<evidence type="ECO:0000269" key="10">
    <source>
    </source>
</evidence>
<evidence type="ECO:0000269" key="11">
    <source>
    </source>
</evidence>
<evidence type="ECO:0007744" key="12">
    <source>
        <dbReference type="PDB" id="3V08"/>
    </source>
</evidence>
<evidence type="ECO:0007744" key="13">
    <source>
        <dbReference type="PDB" id="4F5T"/>
    </source>
</evidence>
<evidence type="ECO:0007744" key="14">
    <source>
        <dbReference type="PDB" id="4F5U"/>
    </source>
</evidence>
<evidence type="ECO:0007744" key="15">
    <source>
        <dbReference type="PDB" id="4J2V"/>
    </source>
</evidence>
<evidence type="ECO:0007744" key="16">
    <source>
        <dbReference type="PDB" id="4OT2"/>
    </source>
</evidence>
<evidence type="ECO:0007744" key="17">
    <source>
        <dbReference type="PDB" id="5IIH"/>
    </source>
</evidence>
<evidence type="ECO:0007744" key="18">
    <source>
        <dbReference type="PDB" id="5IIX"/>
    </source>
</evidence>
<evidence type="ECO:0007829" key="19">
    <source>
        <dbReference type="PDB" id="4F5T"/>
    </source>
</evidence>
<evidence type="ECO:0007829" key="20">
    <source>
        <dbReference type="PDB" id="4F5U"/>
    </source>
</evidence>
<evidence type="ECO:0007829" key="21">
    <source>
        <dbReference type="PDB" id="4J2V"/>
    </source>
</evidence>
<evidence type="ECO:0007829" key="22">
    <source>
        <dbReference type="PDB" id="4ZBQ"/>
    </source>
</evidence>
<evidence type="ECO:0007829" key="23">
    <source>
        <dbReference type="PDB" id="6U4X"/>
    </source>
</evidence>
<evidence type="ECO:0007829" key="24">
    <source>
        <dbReference type="PDB" id="7MBL"/>
    </source>
</evidence>
<protein>
    <recommendedName>
        <fullName>Albumin</fullName>
    </recommendedName>
    <allergenName>Equ c 3</allergenName>
</protein>
<feature type="signal peptide" evidence="5">
    <location>
        <begin position="1"/>
        <end position="18"/>
    </location>
</feature>
<feature type="propeptide" id="PRO_0000001065" evidence="3">
    <location>
        <begin position="19"/>
        <end position="24"/>
    </location>
</feature>
<feature type="chain" id="PRO_0000001066" description="Albumin">
    <location>
        <begin position="25"/>
        <end position="607"/>
    </location>
</feature>
<feature type="domain" description="Albumin 1" evidence="6">
    <location>
        <begin position="19"/>
        <end position="209"/>
    </location>
</feature>
<feature type="domain" description="Albumin 2" evidence="6">
    <location>
        <begin position="210"/>
        <end position="402"/>
    </location>
</feature>
<feature type="domain" description="Albumin 3" evidence="6">
    <location>
        <begin position="403"/>
        <end position="600"/>
    </location>
</feature>
<feature type="binding site" evidence="3">
    <location>
        <position position="27"/>
    </location>
    <ligand>
        <name>Cu cation</name>
        <dbReference type="ChEBI" id="CHEBI:23378"/>
    </ligand>
</feature>
<feature type="binding site" evidence="2">
    <location>
        <position position="30"/>
    </location>
    <ligand>
        <name>Ca(2+)</name>
        <dbReference type="ChEBI" id="CHEBI:29108"/>
        <label>1</label>
    </ligand>
</feature>
<feature type="binding site" evidence="2">
    <location>
        <position position="37"/>
    </location>
    <ligand>
        <name>Ca(2+)</name>
        <dbReference type="ChEBI" id="CHEBI:29108"/>
        <label>2</label>
    </ligand>
</feature>
<feature type="binding site" evidence="11 17">
    <location>
        <position position="91"/>
    </location>
    <ligand>
        <name>Zn(2+)</name>
        <dbReference type="ChEBI" id="CHEBI:29105"/>
    </ligand>
</feature>
<feature type="binding site" evidence="2">
    <location>
        <position position="267"/>
    </location>
    <ligand>
        <name>Ca(2+)</name>
        <dbReference type="ChEBI" id="CHEBI:29108"/>
        <label>1</label>
    </ligand>
</feature>
<feature type="binding site" evidence="11 17">
    <location>
        <position position="270"/>
    </location>
    <ligand>
        <name>Zn(2+)</name>
        <dbReference type="ChEBI" id="CHEBI:29105"/>
    </ligand>
</feature>
<feature type="binding site" evidence="2">
    <location>
        <position position="272"/>
    </location>
    <ligand>
        <name>Ca(2+)</name>
        <dbReference type="ChEBI" id="CHEBI:29108"/>
        <label>1</label>
    </ligand>
</feature>
<feature type="binding site" evidence="11 17">
    <location>
        <position position="272"/>
    </location>
    <ligand>
        <name>Zn(2+)</name>
        <dbReference type="ChEBI" id="CHEBI:29105"/>
    </ligand>
</feature>
<feature type="binding site" evidence="2">
    <location>
        <position position="275"/>
    </location>
    <ligand>
        <name>Ca(2+)</name>
        <dbReference type="ChEBI" id="CHEBI:29108"/>
        <label>1</label>
    </ligand>
</feature>
<feature type="binding site" evidence="2">
    <location>
        <position position="278"/>
    </location>
    <ligand>
        <name>Ca(2+)</name>
        <dbReference type="ChEBI" id="CHEBI:29108"/>
        <label>2</label>
    </ligand>
</feature>
<feature type="binding site" evidence="2">
    <location>
        <position position="282"/>
    </location>
    <ligand>
        <name>Ca(2+)</name>
        <dbReference type="ChEBI" id="CHEBI:29108"/>
        <label>2</label>
    </ligand>
</feature>
<feature type="modified residue" description="Phosphoserine" evidence="1">
    <location>
        <position position="29"/>
    </location>
</feature>
<feature type="modified residue" description="Phosphoserine" evidence="1">
    <location>
        <position position="82"/>
    </location>
</feature>
<feature type="modified residue" description="Phosphoserine" evidence="1">
    <location>
        <position position="89"/>
    </location>
</feature>
<feature type="modified residue" description="Phosphothreonine" evidence="1">
    <location>
        <position position="107"/>
    </location>
</feature>
<feature type="modified residue" description="Phosphoserine" evidence="1">
    <location>
        <position position="442"/>
    </location>
</feature>
<feature type="modified residue" description="Phosphothreonine" evidence="1">
    <location>
        <position position="443"/>
    </location>
</feature>
<feature type="modified residue" description="Phosphothreonine" evidence="1">
    <location>
        <position position="445"/>
    </location>
</feature>
<feature type="modified residue" description="Phosphoserine" evidence="1">
    <location>
        <position position="512"/>
    </location>
</feature>
<feature type="modified residue" description="N6-methyllysine" evidence="1">
    <location>
        <position position="557"/>
    </location>
</feature>
<feature type="modified residue" description="Phosphothreonine" evidence="3">
    <location>
        <position position="569"/>
    </location>
</feature>
<feature type="modified residue" description="N6-succinyllysine" evidence="4">
    <location>
        <position position="587"/>
    </location>
</feature>
<feature type="disulfide bond" evidence="7 8 9 10 12 13 14 15 16">
    <location>
        <begin position="77"/>
        <end position="86"/>
    </location>
</feature>
<feature type="disulfide bond" evidence="7 8 9 10 12 13 14 15 16">
    <location>
        <begin position="99"/>
        <end position="115"/>
    </location>
</feature>
<feature type="disulfide bond" evidence="7 8 9 10 12 13 14 15 16">
    <location>
        <begin position="114"/>
        <end position="125"/>
    </location>
</feature>
<feature type="disulfide bond" evidence="7 8 9 10 12 13 14 15 16">
    <location>
        <begin position="147"/>
        <end position="192"/>
    </location>
</feature>
<feature type="disulfide bond" evidence="7 8 9 10 12 13 14 15 16">
    <location>
        <begin position="191"/>
        <end position="200"/>
    </location>
</feature>
<feature type="disulfide bond" evidence="7 8 9 10 12 13 14 15 16">
    <location>
        <begin position="223"/>
        <end position="269"/>
    </location>
</feature>
<feature type="disulfide bond" evidence="7 8 9 10 12 13 14 15 16">
    <location>
        <begin position="268"/>
        <end position="276"/>
    </location>
</feature>
<feature type="disulfide bond" evidence="7 8 9 10 12 13 14 15 16">
    <location>
        <begin position="288"/>
        <end position="302"/>
    </location>
</feature>
<feature type="disulfide bond" evidence="7 8 9 10 12 13 14 15 16">
    <location>
        <begin position="301"/>
        <end position="312"/>
    </location>
</feature>
<feature type="disulfide bond" evidence="7 8 9 10 12 13 14 15 16">
    <location>
        <begin position="339"/>
        <end position="384"/>
    </location>
</feature>
<feature type="disulfide bond" evidence="7 8 9 10 12 13 14 15 16">
    <location>
        <begin position="383"/>
        <end position="392"/>
    </location>
</feature>
<feature type="disulfide bond" evidence="7 8 9 10 12 13 14 15 16">
    <location>
        <begin position="415"/>
        <end position="461"/>
    </location>
</feature>
<feature type="disulfide bond" evidence="7 8 9 10 12 13 14 15 16">
    <location>
        <begin position="460"/>
        <end position="471"/>
    </location>
</feature>
<feature type="disulfide bond" evidence="7 8 9 10 12 13 14 15 16">
    <location>
        <begin position="484"/>
        <end position="500"/>
    </location>
</feature>
<feature type="disulfide bond" evidence="7 8 9 10 12 13 14 15 16">
    <location>
        <begin position="499"/>
        <end position="510"/>
    </location>
</feature>
<feature type="disulfide bond" evidence="7 8 9 10 12 13 14 15 16">
    <location>
        <begin position="537"/>
        <end position="582"/>
    </location>
</feature>
<feature type="disulfide bond" evidence="7 8 9 10 12 13 14 15 16">
    <location>
        <begin position="581"/>
        <end position="590"/>
    </location>
</feature>
<feature type="strand" evidence="19">
    <location>
        <begin position="27"/>
        <end position="29"/>
    </location>
</feature>
<feature type="helix" evidence="22">
    <location>
        <begin position="30"/>
        <end position="54"/>
    </location>
</feature>
<feature type="strand" evidence="21">
    <location>
        <begin position="55"/>
        <end position="58"/>
    </location>
</feature>
<feature type="helix" evidence="22">
    <location>
        <begin position="60"/>
        <end position="79"/>
    </location>
</feature>
<feature type="turn" evidence="22">
    <location>
        <begin position="84"/>
        <end position="87"/>
    </location>
</feature>
<feature type="helix" evidence="22">
    <location>
        <begin position="90"/>
        <end position="98"/>
    </location>
</feature>
<feature type="turn" evidence="23">
    <location>
        <begin position="99"/>
        <end position="103"/>
    </location>
</feature>
<feature type="helix" evidence="22">
    <location>
        <begin position="104"/>
        <end position="107"/>
    </location>
</feature>
<feature type="turn" evidence="22">
    <location>
        <begin position="109"/>
        <end position="111"/>
    </location>
</feature>
<feature type="helix" evidence="22">
    <location>
        <begin position="112"/>
        <end position="115"/>
    </location>
</feature>
<feature type="helix" evidence="22">
    <location>
        <begin position="121"/>
        <end position="128"/>
    </location>
</feature>
<feature type="helix" evidence="22">
    <location>
        <begin position="143"/>
        <end position="152"/>
    </location>
</feature>
<feature type="helix" evidence="22">
    <location>
        <begin position="154"/>
        <end position="168"/>
    </location>
</feature>
<feature type="helix" evidence="22">
    <location>
        <begin position="174"/>
        <end position="191"/>
    </location>
</feature>
<feature type="strand" evidence="22">
    <location>
        <begin position="194"/>
        <end position="196"/>
    </location>
</feature>
<feature type="helix" evidence="22">
    <location>
        <begin position="197"/>
        <end position="229"/>
    </location>
</feature>
<feature type="helix" evidence="22">
    <location>
        <begin position="231"/>
        <end position="245"/>
    </location>
</feature>
<feature type="strand" evidence="24">
    <location>
        <begin position="247"/>
        <end position="249"/>
    </location>
</feature>
<feature type="helix" evidence="22">
    <location>
        <begin position="251"/>
        <end position="269"/>
    </location>
</feature>
<feature type="helix" evidence="22">
    <location>
        <begin position="273"/>
        <end position="289"/>
    </location>
</feature>
<feature type="helix" evidence="22">
    <location>
        <begin position="291"/>
        <end position="294"/>
    </location>
</feature>
<feature type="helix" evidence="22">
    <location>
        <begin position="296"/>
        <end position="298"/>
    </location>
</feature>
<feature type="helix" evidence="22">
    <location>
        <begin position="299"/>
        <end position="302"/>
    </location>
</feature>
<feature type="helix" evidence="22">
    <location>
        <begin position="306"/>
        <end position="314"/>
    </location>
</feature>
<feature type="helix" evidence="22">
    <location>
        <begin position="329"/>
        <end position="332"/>
    </location>
</feature>
<feature type="helix" evidence="22">
    <location>
        <begin position="338"/>
        <end position="344"/>
    </location>
</feature>
<feature type="helix" evidence="22">
    <location>
        <begin position="346"/>
        <end position="359"/>
    </location>
</feature>
<feature type="helix" evidence="22">
    <location>
        <begin position="366"/>
        <end position="384"/>
    </location>
</feature>
<feature type="strand" evidence="22">
    <location>
        <begin position="386"/>
        <end position="388"/>
    </location>
</feature>
<feature type="helix" evidence="22">
    <location>
        <begin position="389"/>
        <end position="393"/>
    </location>
</feature>
<feature type="helix" evidence="22">
    <location>
        <begin position="394"/>
        <end position="400"/>
    </location>
</feature>
<feature type="helix" evidence="22">
    <location>
        <begin position="401"/>
        <end position="421"/>
    </location>
</feature>
<feature type="helix" evidence="22">
    <location>
        <begin position="423"/>
        <end position="437"/>
    </location>
</feature>
<feature type="helix" evidence="22">
    <location>
        <begin position="443"/>
        <end position="460"/>
    </location>
</feature>
<feature type="helix" evidence="22">
    <location>
        <begin position="465"/>
        <end position="467"/>
    </location>
</feature>
<feature type="helix" evidence="22">
    <location>
        <begin position="468"/>
        <end position="489"/>
    </location>
</feature>
<feature type="helix" evidence="22">
    <location>
        <begin position="494"/>
        <end position="501"/>
    </location>
</feature>
<feature type="turn" evidence="22">
    <location>
        <begin position="504"/>
        <end position="506"/>
    </location>
</feature>
<feature type="helix" evidence="22">
    <location>
        <begin position="507"/>
        <end position="513"/>
    </location>
</feature>
<feature type="strand" evidence="20">
    <location>
        <begin position="518"/>
        <end position="520"/>
    </location>
</feature>
<feature type="helix" evidence="22">
    <location>
        <begin position="527"/>
        <end position="530"/>
    </location>
</feature>
<feature type="helix" evidence="22">
    <location>
        <begin position="534"/>
        <end position="538"/>
    </location>
</feature>
<feature type="helix" evidence="22">
    <location>
        <begin position="541"/>
        <end position="558"/>
    </location>
</feature>
<feature type="helix" evidence="22">
    <location>
        <begin position="564"/>
        <end position="582"/>
    </location>
</feature>
<feature type="strand" evidence="22">
    <location>
        <begin position="584"/>
        <end position="586"/>
    </location>
</feature>
<feature type="helix" evidence="22">
    <location>
        <begin position="587"/>
        <end position="605"/>
    </location>
</feature>
<name>ALBU_HORSE</name>
<reference key="1">
    <citation type="journal article" date="1993" name="Eur. J. Biochem.">
        <title>X-ray and primary structure of horse serum albumin (Equus caballus) at 0.27-nm resolution.</title>
        <authorList>
            <person name="Ho J.X."/>
            <person name="Holowachuk E.W."/>
            <person name="Norton E.J."/>
            <person name="Twigg P.D."/>
            <person name="Carter D.C."/>
        </authorList>
    </citation>
    <scope>NUCLEOTIDE SEQUENCE [MRNA]</scope>
    <scope>X-RAY CRYSTALLOGRAPHY (2.7 ANGSTROMS)</scope>
    <source>
        <tissue>Liver</tissue>
    </source>
</reference>
<reference evidence="14" key="2">
    <citation type="journal article" date="2012" name="Acta Crystallogr. D">
        <title>Structures of bovine, equine and leporine serum albumin.</title>
        <authorList>
            <person name="Bujacz A."/>
        </authorList>
    </citation>
    <scope>X-RAY CRYSTALLOGRAPHY (2.04 ANGSTROMS) OF 25-607</scope>
    <scope>DISULFIDE BONDS</scope>
</reference>
<reference evidence="12" key="3">
    <citation type="journal article" date="2012" name="Mol. Immunol.">
        <title>Structural and immunologic characterization of bovine, horse, and rabbit serum albumins.</title>
        <authorList>
            <person name="Majorek K.A."/>
            <person name="Porebski P.J."/>
            <person name="Dayal A."/>
            <person name="Zimmerman M.D."/>
            <person name="Jablonska K."/>
            <person name="Stewart A.J."/>
            <person name="Chruszcz M."/>
            <person name="Minor W."/>
        </authorList>
    </citation>
    <scope>X-RAY CRYSTALLOGRAPHY (2.45 ANGSTROMS) OF 25-607</scope>
    <scope>DISULFIDE BONDS</scope>
</reference>
<reference evidence="15" key="4">
    <citation type="journal article" date="2013" name="Int. J. Biol. Macromol.">
        <title>Crystallographic studies of the complexes of bovine and equine serum albumin with 3,5-diiodosalicylic acid.</title>
        <authorList>
            <person name="Sekula B."/>
            <person name="Zielinski K."/>
            <person name="Bujacz A."/>
        </authorList>
    </citation>
    <scope>X-RAY CRYSTALLOGRAPHY (2.12 ANGSTROMS) OF 25-607</scope>
    <scope>DISULFIDE BONDS</scope>
</reference>
<reference evidence="16" key="5">
    <citation type="journal article" date="2014" name="Proteins">
        <title>Structural studies of bovine, equine, and leporine serum albumin complexes with naproxen.</title>
        <authorList>
            <person name="Bujacz A."/>
            <person name="Zielinski K."/>
            <person name="Sekula B."/>
        </authorList>
    </citation>
    <scope>X-RAY CRYSTALLOGRAPHY (2.42 ANGSTROMS) OF 25-607</scope>
    <scope>DISULFIDE BONDS</scope>
</reference>
<reference evidence="18" key="6">
    <citation type="journal article" date="2016" name="Chem. Sci.">
        <title>Circulatory zinc transport is controlled by distinct interdomain sites on mammalian albumins.</title>
        <authorList>
            <person name="Handing K.B."/>
            <person name="Shabalin I.G."/>
            <person name="Kassaar O."/>
            <person name="Khazaipoul S."/>
            <person name="Blindauer C.A."/>
            <person name="Stewart A.J."/>
            <person name="Chruszcz M."/>
            <person name="Minor W."/>
        </authorList>
    </citation>
    <scope>X-RAY CRYSTALLOGRAPHY (2.20 ANGSTROMS) OF 25-607 IN COMPLEX WITH ZINC</scope>
</reference>